<organism>
    <name type="scientific">Ambystoma mexicanum</name>
    <name type="common">Axolotl</name>
    <dbReference type="NCBI Taxonomy" id="8296"/>
    <lineage>
        <taxon>Eukaryota</taxon>
        <taxon>Metazoa</taxon>
        <taxon>Chordata</taxon>
        <taxon>Craniata</taxon>
        <taxon>Vertebrata</taxon>
        <taxon>Euteleostomi</taxon>
        <taxon>Amphibia</taxon>
        <taxon>Batrachia</taxon>
        <taxon>Caudata</taxon>
        <taxon>Salamandroidea</taxon>
        <taxon>Ambystomatidae</taxon>
        <taxon>Ambystoma</taxon>
    </lineage>
</organism>
<dbReference type="EC" id="4.2.99.18" evidence="1"/>
<dbReference type="EMBL" id="S83098">
    <property type="protein sequence ID" value="AAB46849.1"/>
    <property type="molecule type" value="mRNA"/>
</dbReference>
<dbReference type="SMR" id="P79891"/>
<dbReference type="GO" id="GO:0022627">
    <property type="term" value="C:cytosolic small ribosomal subunit"/>
    <property type="evidence" value="ECO:0007669"/>
    <property type="project" value="TreeGrafter"/>
</dbReference>
<dbReference type="GO" id="GO:0005743">
    <property type="term" value="C:mitochondrial inner membrane"/>
    <property type="evidence" value="ECO:0007669"/>
    <property type="project" value="UniProtKB-SubCell"/>
</dbReference>
<dbReference type="GO" id="GO:0005730">
    <property type="term" value="C:nucleolus"/>
    <property type="evidence" value="ECO:0007669"/>
    <property type="project" value="UniProtKB-SubCell"/>
</dbReference>
<dbReference type="GO" id="GO:0005819">
    <property type="term" value="C:spindle"/>
    <property type="evidence" value="ECO:0007669"/>
    <property type="project" value="UniProtKB-SubCell"/>
</dbReference>
<dbReference type="GO" id="GO:0140078">
    <property type="term" value="F:class I DNA-(apurinic or apyrimidinic site) endonuclease activity"/>
    <property type="evidence" value="ECO:0007669"/>
    <property type="project" value="UniProtKB-EC"/>
</dbReference>
<dbReference type="GO" id="GO:0003677">
    <property type="term" value="F:DNA binding"/>
    <property type="evidence" value="ECO:0007669"/>
    <property type="project" value="UniProtKB-KW"/>
</dbReference>
<dbReference type="GO" id="GO:0003723">
    <property type="term" value="F:RNA binding"/>
    <property type="evidence" value="ECO:0007669"/>
    <property type="project" value="UniProtKB-KW"/>
</dbReference>
<dbReference type="GO" id="GO:0003735">
    <property type="term" value="F:structural constituent of ribosome"/>
    <property type="evidence" value="ECO:0007669"/>
    <property type="project" value="InterPro"/>
</dbReference>
<dbReference type="GO" id="GO:0006915">
    <property type="term" value="P:apoptotic process"/>
    <property type="evidence" value="ECO:0007669"/>
    <property type="project" value="UniProtKB-KW"/>
</dbReference>
<dbReference type="GO" id="GO:0051301">
    <property type="term" value="P:cell division"/>
    <property type="evidence" value="ECO:0007669"/>
    <property type="project" value="UniProtKB-KW"/>
</dbReference>
<dbReference type="GO" id="GO:0006281">
    <property type="term" value="P:DNA repair"/>
    <property type="evidence" value="ECO:0007669"/>
    <property type="project" value="UniProtKB-KW"/>
</dbReference>
<dbReference type="GO" id="GO:2001235">
    <property type="term" value="P:positive regulation of apoptotic signaling pathway"/>
    <property type="evidence" value="ECO:0007669"/>
    <property type="project" value="TreeGrafter"/>
</dbReference>
<dbReference type="GO" id="GO:0006417">
    <property type="term" value="P:regulation of translation"/>
    <property type="evidence" value="ECO:0007669"/>
    <property type="project" value="UniProtKB-KW"/>
</dbReference>
<dbReference type="GO" id="GO:0006412">
    <property type="term" value="P:translation"/>
    <property type="evidence" value="ECO:0007669"/>
    <property type="project" value="InterPro"/>
</dbReference>
<dbReference type="CDD" id="cd02413">
    <property type="entry name" value="KH-II_40S_S3"/>
    <property type="match status" value="1"/>
</dbReference>
<dbReference type="FunFam" id="3.30.1140.32:FF:000005">
    <property type="entry name" value="40S ribosomal protein S3"/>
    <property type="match status" value="1"/>
</dbReference>
<dbReference type="FunFam" id="3.30.300.20:FF:000006">
    <property type="entry name" value="40S ribosomal protein S3"/>
    <property type="match status" value="1"/>
</dbReference>
<dbReference type="Gene3D" id="3.30.300.20">
    <property type="match status" value="1"/>
</dbReference>
<dbReference type="Gene3D" id="3.30.1140.32">
    <property type="entry name" value="Ribosomal protein S3, C-terminal domain"/>
    <property type="match status" value="1"/>
</dbReference>
<dbReference type="InterPro" id="IPR015946">
    <property type="entry name" value="KH_dom-like_a/b"/>
</dbReference>
<dbReference type="InterPro" id="IPR004044">
    <property type="entry name" value="KH_dom_type_2"/>
</dbReference>
<dbReference type="InterPro" id="IPR009019">
    <property type="entry name" value="KH_sf_prok-type"/>
</dbReference>
<dbReference type="InterPro" id="IPR036419">
    <property type="entry name" value="Ribosomal_S3_C_sf"/>
</dbReference>
<dbReference type="InterPro" id="IPR001351">
    <property type="entry name" value="Ribosomal_uS3_C"/>
</dbReference>
<dbReference type="InterPro" id="IPR018280">
    <property type="entry name" value="Ribosomal_uS3_CS"/>
</dbReference>
<dbReference type="InterPro" id="IPR005703">
    <property type="entry name" value="Ribosomal_uS3_euk/arc"/>
</dbReference>
<dbReference type="NCBIfam" id="NF003219">
    <property type="entry name" value="PRK04191.1"/>
    <property type="match status" value="1"/>
</dbReference>
<dbReference type="NCBIfam" id="TIGR01008">
    <property type="entry name" value="uS3_euk_arch"/>
    <property type="match status" value="1"/>
</dbReference>
<dbReference type="PANTHER" id="PTHR11760">
    <property type="entry name" value="30S/40S RIBOSOMAL PROTEIN S3"/>
    <property type="match status" value="1"/>
</dbReference>
<dbReference type="PANTHER" id="PTHR11760:SF32">
    <property type="entry name" value="SMALL RIBOSOMAL SUBUNIT PROTEIN US3"/>
    <property type="match status" value="1"/>
</dbReference>
<dbReference type="Pfam" id="PF07650">
    <property type="entry name" value="KH_2"/>
    <property type="match status" value="1"/>
</dbReference>
<dbReference type="Pfam" id="PF00189">
    <property type="entry name" value="Ribosomal_S3_C"/>
    <property type="match status" value="1"/>
</dbReference>
<dbReference type="SUPFAM" id="SSF54814">
    <property type="entry name" value="Prokaryotic type KH domain (KH-domain type II)"/>
    <property type="match status" value="1"/>
</dbReference>
<dbReference type="SUPFAM" id="SSF54821">
    <property type="entry name" value="Ribosomal protein S3 C-terminal domain"/>
    <property type="match status" value="1"/>
</dbReference>
<dbReference type="PROSITE" id="PS50823">
    <property type="entry name" value="KH_TYPE_2"/>
    <property type="match status" value="1"/>
</dbReference>
<dbReference type="PROSITE" id="PS00548">
    <property type="entry name" value="RIBOSOMAL_S3"/>
    <property type="match status" value="1"/>
</dbReference>
<feature type="chain" id="PRO_0000130324" description="Small ribosomal subunit protein uS3">
    <location>
        <begin position="1"/>
        <end position="253"/>
    </location>
</feature>
<feature type="domain" description="KH type-2" evidence="2">
    <location>
        <begin position="21"/>
        <end position="92"/>
    </location>
</feature>
<feature type="region of interest" description="Disordered" evidence="3">
    <location>
        <begin position="211"/>
        <end position="253"/>
    </location>
</feature>
<feature type="compositionally biased region" description="Pro residues" evidence="3">
    <location>
        <begin position="233"/>
        <end position="253"/>
    </location>
</feature>
<protein>
    <recommendedName>
        <fullName evidence="4">Small ribosomal subunit protein uS3</fullName>
        <ecNumber evidence="1">4.2.99.18</ecNumber>
    </recommendedName>
    <alternativeName>
        <fullName>40S ribosomal protein S3</fullName>
    </alternativeName>
</protein>
<evidence type="ECO:0000250" key="1">
    <source>
        <dbReference type="UniProtKB" id="P23396"/>
    </source>
</evidence>
<evidence type="ECO:0000255" key="2">
    <source>
        <dbReference type="PROSITE-ProRule" id="PRU00118"/>
    </source>
</evidence>
<evidence type="ECO:0000256" key="3">
    <source>
        <dbReference type="SAM" id="MobiDB-lite"/>
    </source>
</evidence>
<evidence type="ECO:0000305" key="4"/>
<keyword id="KW-0053">Apoptosis</keyword>
<keyword id="KW-0131">Cell cycle</keyword>
<keyword id="KW-0132">Cell division</keyword>
<keyword id="KW-0963">Cytoplasm</keyword>
<keyword id="KW-0206">Cytoskeleton</keyword>
<keyword id="KW-0227">DNA damage</keyword>
<keyword id="KW-0234">DNA repair</keyword>
<keyword id="KW-0238">DNA-binding</keyword>
<keyword id="KW-0456">Lyase</keyword>
<keyword id="KW-0472">Membrane</keyword>
<keyword id="KW-0496">Mitochondrion</keyword>
<keyword id="KW-0999">Mitochondrion inner membrane</keyword>
<keyword id="KW-0498">Mitosis</keyword>
<keyword id="KW-0539">Nucleus</keyword>
<keyword id="KW-0687">Ribonucleoprotein</keyword>
<keyword id="KW-0689">Ribosomal protein</keyword>
<keyword id="KW-0694">RNA-binding</keyword>
<keyword id="KW-0804">Transcription</keyword>
<keyword id="KW-0805">Transcription regulation</keyword>
<keyword id="KW-0810">Translation regulation</keyword>
<gene>
    <name type="primary">RPS3</name>
</gene>
<comment type="function">
    <text evidence="1">Component of the small ribosomal subunit. The ribosome is a large ribonucleoprotein complex responsible for the synthesis of proteins in the cell. Has endonuclease activity and plays a role in repair of damaged DNA. Also involved in other processes including regulation of transcription, translation of its cognate mRNA, spindle formation and chromosome movement during mitosis, and apoptosis.</text>
</comment>
<comment type="catalytic activity">
    <reaction evidence="1">
        <text>2'-deoxyribonucleotide-(2'-deoxyribose 5'-phosphate)-2'-deoxyribonucleotide-DNA = a 3'-end 2'-deoxyribonucleotide-(2,3-dehydro-2,3-deoxyribose 5'-phosphate)-DNA + a 5'-end 5'-phospho-2'-deoxyribonucleoside-DNA + H(+)</text>
        <dbReference type="Rhea" id="RHEA:66592"/>
        <dbReference type="Rhea" id="RHEA-COMP:13180"/>
        <dbReference type="Rhea" id="RHEA-COMP:16897"/>
        <dbReference type="Rhea" id="RHEA-COMP:17067"/>
        <dbReference type="ChEBI" id="CHEBI:15378"/>
        <dbReference type="ChEBI" id="CHEBI:136412"/>
        <dbReference type="ChEBI" id="CHEBI:157695"/>
        <dbReference type="ChEBI" id="CHEBI:167181"/>
        <dbReference type="EC" id="4.2.99.18"/>
    </reaction>
</comment>
<comment type="subcellular location">
    <subcellularLocation>
        <location evidence="1">Cytoplasm</location>
    </subcellularLocation>
    <subcellularLocation>
        <location evidence="1">Nucleus</location>
    </subcellularLocation>
    <subcellularLocation>
        <location evidence="1">Nucleus</location>
        <location evidence="1">Nucleolus</location>
    </subcellularLocation>
    <subcellularLocation>
        <location evidence="1">Mitochondrion inner membrane</location>
        <topology evidence="1">Peripheral membrane protein</topology>
    </subcellularLocation>
    <subcellularLocation>
        <location evidence="1">Cytoplasm</location>
        <location evidence="1">Cytoskeleton</location>
        <location evidence="1">Spindle</location>
    </subcellularLocation>
</comment>
<comment type="similarity">
    <text evidence="4">Belongs to the universal ribosomal protein uS3 family.</text>
</comment>
<reference key="1">
    <citation type="journal article" date="1996" name="Biochem. Mol. Biol. Int.">
        <title>Nucleotide sequence and expression of ribosomal protein S3 mRNA during embryogenesis in the Mexican axolotl (Ambystoma mexicanum).</title>
        <authorList>
            <person name="Bhatia R."/>
            <person name="Dube D.K."/>
            <person name="Lemanski L.F."/>
        </authorList>
    </citation>
    <scope>NUCLEOTIDE SEQUENCE [MRNA]</scope>
</reference>
<proteinExistence type="evidence at transcript level"/>
<accession>P79891</accession>
<sequence>MAVQISKKRKFVADGIFKAELNEFLTRELAEDGYSGVEVRVTPTRTEIIILATRTQNVLGEKGRRIRELTAVVQKRFGFPEGSVELYAEKVATRGLCAIAQAESLRYKLLGGLAVRRACYGVLRFIMESGSKGCEVVVSGKLRGQRAKSMKFVDGLMIHSGDPVNYYVDTAVRHVLLRQGVLGIKVKIMLAWDPSGKIGPKKPLPDHVSIVEPKDEILPTTPISEQKGGKPDPQVPQQPPQQPPAMPPPVPTA</sequence>
<name>RS3_AMBME</name>